<name>RLMN_LISMF</name>
<keyword id="KW-0004">4Fe-4S</keyword>
<keyword id="KW-0963">Cytoplasm</keyword>
<keyword id="KW-1015">Disulfide bond</keyword>
<keyword id="KW-0408">Iron</keyword>
<keyword id="KW-0411">Iron-sulfur</keyword>
<keyword id="KW-0479">Metal-binding</keyword>
<keyword id="KW-0489">Methyltransferase</keyword>
<keyword id="KW-0698">rRNA processing</keyword>
<keyword id="KW-0949">S-adenosyl-L-methionine</keyword>
<keyword id="KW-0808">Transferase</keyword>
<keyword id="KW-0819">tRNA processing</keyword>
<accession>Q723G9</accession>
<protein>
    <recommendedName>
        <fullName evidence="1">Probable dual-specificity RNA methyltransferase RlmN</fullName>
        <ecNumber evidence="1">2.1.1.192</ecNumber>
    </recommendedName>
    <alternativeName>
        <fullName evidence="1">23S rRNA (adenine(2503)-C(2))-methyltransferase</fullName>
    </alternativeName>
    <alternativeName>
        <fullName evidence="1">23S rRNA m2A2503 methyltransferase</fullName>
    </alternativeName>
    <alternativeName>
        <fullName evidence="1">Ribosomal RNA large subunit methyltransferase N</fullName>
    </alternativeName>
    <alternativeName>
        <fullName evidence="1">tRNA (adenine(37)-C(2))-methyltransferase</fullName>
    </alternativeName>
    <alternativeName>
        <fullName evidence="1">tRNA m2A37 methyltransferase</fullName>
    </alternativeName>
</protein>
<evidence type="ECO:0000255" key="1">
    <source>
        <dbReference type="HAMAP-Rule" id="MF_01849"/>
    </source>
</evidence>
<evidence type="ECO:0000255" key="2">
    <source>
        <dbReference type="PROSITE-ProRule" id="PRU01266"/>
    </source>
</evidence>
<feature type="chain" id="PRO_0000350240" description="Probable dual-specificity RNA methyltransferase RlmN">
    <location>
        <begin position="1"/>
        <end position="367"/>
    </location>
</feature>
<feature type="domain" description="Radical SAM core" evidence="2">
    <location>
        <begin position="98"/>
        <end position="326"/>
    </location>
</feature>
<feature type="active site" description="Proton acceptor" evidence="1">
    <location>
        <position position="92"/>
    </location>
</feature>
<feature type="active site" description="S-methylcysteine intermediate" evidence="1">
    <location>
        <position position="341"/>
    </location>
</feature>
<feature type="binding site" evidence="1">
    <location>
        <position position="112"/>
    </location>
    <ligand>
        <name>[4Fe-4S] cluster</name>
        <dbReference type="ChEBI" id="CHEBI:49883"/>
        <note>4Fe-4S-S-AdoMet</note>
    </ligand>
</feature>
<feature type="binding site" evidence="1">
    <location>
        <position position="116"/>
    </location>
    <ligand>
        <name>[4Fe-4S] cluster</name>
        <dbReference type="ChEBI" id="CHEBI:49883"/>
        <note>4Fe-4S-S-AdoMet</note>
    </ligand>
</feature>
<feature type="binding site" evidence="1">
    <location>
        <position position="119"/>
    </location>
    <ligand>
        <name>[4Fe-4S] cluster</name>
        <dbReference type="ChEBI" id="CHEBI:49883"/>
        <note>4Fe-4S-S-AdoMet</note>
    </ligand>
</feature>
<feature type="binding site" evidence="1">
    <location>
        <begin position="164"/>
        <end position="165"/>
    </location>
    <ligand>
        <name>S-adenosyl-L-methionine</name>
        <dbReference type="ChEBI" id="CHEBI:59789"/>
    </ligand>
</feature>
<feature type="binding site" evidence="1">
    <location>
        <position position="196"/>
    </location>
    <ligand>
        <name>S-adenosyl-L-methionine</name>
        <dbReference type="ChEBI" id="CHEBI:59789"/>
    </ligand>
</feature>
<feature type="binding site" evidence="1">
    <location>
        <begin position="219"/>
        <end position="221"/>
    </location>
    <ligand>
        <name>S-adenosyl-L-methionine</name>
        <dbReference type="ChEBI" id="CHEBI:59789"/>
    </ligand>
</feature>
<feature type="binding site" evidence="1">
    <location>
        <position position="297"/>
    </location>
    <ligand>
        <name>S-adenosyl-L-methionine</name>
        <dbReference type="ChEBI" id="CHEBI:59789"/>
    </ligand>
</feature>
<feature type="disulfide bond" description="(transient)" evidence="1">
    <location>
        <begin position="105"/>
        <end position="341"/>
    </location>
</feature>
<sequence>MEKSSIYGLTWTKLTEWLEAHGQKKFRATQVWDWLYRKRVKTFEEMSNVPKETIELLTANFVMNTLEEQVVQESTDGTTKYLFKLSDGNLIETVMMKQEYGLSVCVTTQVGCNIGCTFCASGLLKKSRDLTAGEIVEQIMNVQHYLDGRNLEERVSHVVVMGIGEPFDNYDNVMDFLRVINHDKGLAIGARHITVSTSGLAPRIIDFANEDFQVNLAISLHAPNNELRTSIMRINKTYSIEKLMEAIHYYVNKTNRRITFEYIMLKGVNDHKKEALELAALLGEHRHLAYVNLIPYNPVDEHIDYERSTKEDVLAFYDTLKKNGINCVIRREHGTDIDAACGQLRSKQIKRVGVRERMKQKQAAAEE</sequence>
<organism>
    <name type="scientific">Listeria monocytogenes serotype 4b (strain F2365)</name>
    <dbReference type="NCBI Taxonomy" id="265669"/>
    <lineage>
        <taxon>Bacteria</taxon>
        <taxon>Bacillati</taxon>
        <taxon>Bacillota</taxon>
        <taxon>Bacilli</taxon>
        <taxon>Bacillales</taxon>
        <taxon>Listeriaceae</taxon>
        <taxon>Listeria</taxon>
    </lineage>
</organism>
<dbReference type="EC" id="2.1.1.192" evidence="1"/>
<dbReference type="EMBL" id="AE017262">
    <property type="protein sequence ID" value="AAT03292.1"/>
    <property type="molecule type" value="Genomic_DNA"/>
</dbReference>
<dbReference type="RefSeq" id="WP_003725208.1">
    <property type="nucleotide sequence ID" value="NC_002973.6"/>
</dbReference>
<dbReference type="SMR" id="Q723G9"/>
<dbReference type="GeneID" id="93233932"/>
<dbReference type="KEGG" id="lmf:LMOf2365_0509"/>
<dbReference type="HOGENOM" id="CLU_029101_0_1_9"/>
<dbReference type="GO" id="GO:0005737">
    <property type="term" value="C:cytoplasm"/>
    <property type="evidence" value="ECO:0007669"/>
    <property type="project" value="UniProtKB-SubCell"/>
</dbReference>
<dbReference type="GO" id="GO:0051539">
    <property type="term" value="F:4 iron, 4 sulfur cluster binding"/>
    <property type="evidence" value="ECO:0007669"/>
    <property type="project" value="UniProtKB-UniRule"/>
</dbReference>
<dbReference type="GO" id="GO:0046872">
    <property type="term" value="F:metal ion binding"/>
    <property type="evidence" value="ECO:0007669"/>
    <property type="project" value="UniProtKB-KW"/>
</dbReference>
<dbReference type="GO" id="GO:0070040">
    <property type="term" value="F:rRNA (adenine(2503)-C2-)-methyltransferase activity"/>
    <property type="evidence" value="ECO:0007669"/>
    <property type="project" value="UniProtKB-UniRule"/>
</dbReference>
<dbReference type="GO" id="GO:0019843">
    <property type="term" value="F:rRNA binding"/>
    <property type="evidence" value="ECO:0007669"/>
    <property type="project" value="UniProtKB-UniRule"/>
</dbReference>
<dbReference type="GO" id="GO:0002935">
    <property type="term" value="F:tRNA (adenine(37)-C2)-methyltransferase activity"/>
    <property type="evidence" value="ECO:0007669"/>
    <property type="project" value="UniProtKB-UniRule"/>
</dbReference>
<dbReference type="GO" id="GO:0000049">
    <property type="term" value="F:tRNA binding"/>
    <property type="evidence" value="ECO:0007669"/>
    <property type="project" value="UniProtKB-UniRule"/>
</dbReference>
<dbReference type="GO" id="GO:0070475">
    <property type="term" value="P:rRNA base methylation"/>
    <property type="evidence" value="ECO:0007669"/>
    <property type="project" value="UniProtKB-UniRule"/>
</dbReference>
<dbReference type="GO" id="GO:0030488">
    <property type="term" value="P:tRNA methylation"/>
    <property type="evidence" value="ECO:0007669"/>
    <property type="project" value="UniProtKB-UniRule"/>
</dbReference>
<dbReference type="CDD" id="cd01335">
    <property type="entry name" value="Radical_SAM"/>
    <property type="match status" value="1"/>
</dbReference>
<dbReference type="FunFam" id="3.20.20.70:FF:000014">
    <property type="entry name" value="Probable dual-specificity RNA methyltransferase RlmN"/>
    <property type="match status" value="1"/>
</dbReference>
<dbReference type="Gene3D" id="1.10.150.530">
    <property type="match status" value="1"/>
</dbReference>
<dbReference type="Gene3D" id="3.20.20.70">
    <property type="entry name" value="Aldolase class I"/>
    <property type="match status" value="1"/>
</dbReference>
<dbReference type="HAMAP" id="MF_01849">
    <property type="entry name" value="RNA_methyltr_RlmN"/>
    <property type="match status" value="1"/>
</dbReference>
<dbReference type="InterPro" id="IPR013785">
    <property type="entry name" value="Aldolase_TIM"/>
</dbReference>
<dbReference type="InterPro" id="IPR040072">
    <property type="entry name" value="Methyltransferase_A"/>
</dbReference>
<dbReference type="InterPro" id="IPR048641">
    <property type="entry name" value="RlmN_N"/>
</dbReference>
<dbReference type="InterPro" id="IPR027492">
    <property type="entry name" value="RNA_MTrfase_RlmN"/>
</dbReference>
<dbReference type="InterPro" id="IPR004383">
    <property type="entry name" value="rRNA_lsu_MTrfase_RlmN/Cfr"/>
</dbReference>
<dbReference type="InterPro" id="IPR007197">
    <property type="entry name" value="rSAM"/>
</dbReference>
<dbReference type="NCBIfam" id="TIGR00048">
    <property type="entry name" value="rRNA_mod_RlmN"/>
    <property type="match status" value="1"/>
</dbReference>
<dbReference type="PANTHER" id="PTHR30544">
    <property type="entry name" value="23S RRNA METHYLTRANSFERASE"/>
    <property type="match status" value="1"/>
</dbReference>
<dbReference type="PANTHER" id="PTHR30544:SF5">
    <property type="entry name" value="RADICAL SAM CORE DOMAIN-CONTAINING PROTEIN"/>
    <property type="match status" value="1"/>
</dbReference>
<dbReference type="Pfam" id="PF04055">
    <property type="entry name" value="Radical_SAM"/>
    <property type="match status" value="1"/>
</dbReference>
<dbReference type="Pfam" id="PF21016">
    <property type="entry name" value="RlmN_N"/>
    <property type="match status" value="1"/>
</dbReference>
<dbReference type="PIRSF" id="PIRSF006004">
    <property type="entry name" value="CHP00048"/>
    <property type="match status" value="1"/>
</dbReference>
<dbReference type="SFLD" id="SFLDF00275">
    <property type="entry name" value="adenosine_C2_methyltransferase"/>
    <property type="match status" value="1"/>
</dbReference>
<dbReference type="SFLD" id="SFLDG01062">
    <property type="entry name" value="methyltransferase_(Class_A)"/>
    <property type="match status" value="1"/>
</dbReference>
<dbReference type="SUPFAM" id="SSF102114">
    <property type="entry name" value="Radical SAM enzymes"/>
    <property type="match status" value="1"/>
</dbReference>
<dbReference type="PROSITE" id="PS51918">
    <property type="entry name" value="RADICAL_SAM"/>
    <property type="match status" value="1"/>
</dbReference>
<comment type="function">
    <text evidence="1">Specifically methylates position 2 of adenine 2503 in 23S rRNA and position 2 of adenine 37 in tRNAs.</text>
</comment>
<comment type="catalytic activity">
    <reaction evidence="1">
        <text>adenosine(2503) in 23S rRNA + 2 reduced [2Fe-2S]-[ferredoxin] + 2 S-adenosyl-L-methionine = 2-methyladenosine(2503) in 23S rRNA + 5'-deoxyadenosine + L-methionine + 2 oxidized [2Fe-2S]-[ferredoxin] + S-adenosyl-L-homocysteine</text>
        <dbReference type="Rhea" id="RHEA:42916"/>
        <dbReference type="Rhea" id="RHEA-COMP:10000"/>
        <dbReference type="Rhea" id="RHEA-COMP:10001"/>
        <dbReference type="Rhea" id="RHEA-COMP:10152"/>
        <dbReference type="Rhea" id="RHEA-COMP:10282"/>
        <dbReference type="ChEBI" id="CHEBI:17319"/>
        <dbReference type="ChEBI" id="CHEBI:33737"/>
        <dbReference type="ChEBI" id="CHEBI:33738"/>
        <dbReference type="ChEBI" id="CHEBI:57844"/>
        <dbReference type="ChEBI" id="CHEBI:57856"/>
        <dbReference type="ChEBI" id="CHEBI:59789"/>
        <dbReference type="ChEBI" id="CHEBI:74411"/>
        <dbReference type="ChEBI" id="CHEBI:74497"/>
        <dbReference type="EC" id="2.1.1.192"/>
    </reaction>
</comment>
<comment type="catalytic activity">
    <reaction evidence="1">
        <text>adenosine(37) in tRNA + 2 reduced [2Fe-2S]-[ferredoxin] + 2 S-adenosyl-L-methionine = 2-methyladenosine(37) in tRNA + 5'-deoxyadenosine + L-methionine + 2 oxidized [2Fe-2S]-[ferredoxin] + S-adenosyl-L-homocysteine</text>
        <dbReference type="Rhea" id="RHEA:43332"/>
        <dbReference type="Rhea" id="RHEA-COMP:10000"/>
        <dbReference type="Rhea" id="RHEA-COMP:10001"/>
        <dbReference type="Rhea" id="RHEA-COMP:10162"/>
        <dbReference type="Rhea" id="RHEA-COMP:10485"/>
        <dbReference type="ChEBI" id="CHEBI:17319"/>
        <dbReference type="ChEBI" id="CHEBI:33737"/>
        <dbReference type="ChEBI" id="CHEBI:33738"/>
        <dbReference type="ChEBI" id="CHEBI:57844"/>
        <dbReference type="ChEBI" id="CHEBI:57856"/>
        <dbReference type="ChEBI" id="CHEBI:59789"/>
        <dbReference type="ChEBI" id="CHEBI:74411"/>
        <dbReference type="ChEBI" id="CHEBI:74497"/>
        <dbReference type="EC" id="2.1.1.192"/>
    </reaction>
</comment>
<comment type="cofactor">
    <cofactor evidence="1">
        <name>[4Fe-4S] cluster</name>
        <dbReference type="ChEBI" id="CHEBI:49883"/>
    </cofactor>
    <text evidence="1">Binds 1 [4Fe-4S] cluster. The cluster is coordinated with 3 cysteines and an exchangeable S-adenosyl-L-methionine.</text>
</comment>
<comment type="subcellular location">
    <subcellularLocation>
        <location evidence="1">Cytoplasm</location>
    </subcellularLocation>
</comment>
<comment type="miscellaneous">
    <text evidence="1">Reaction proceeds by a ping-pong mechanism involving intermediate methylation of a conserved cysteine residue.</text>
</comment>
<comment type="similarity">
    <text evidence="1">Belongs to the radical SAM superfamily. RlmN family.</text>
</comment>
<proteinExistence type="inferred from homology"/>
<gene>
    <name evidence="1" type="primary">rlmN</name>
    <name type="ordered locus">LMOf2365_0509</name>
</gene>
<reference key="1">
    <citation type="journal article" date="2004" name="Nucleic Acids Res.">
        <title>Whole genome comparisons of serotype 4b and 1/2a strains of the food-borne pathogen Listeria monocytogenes reveal new insights into the core genome components of this species.</title>
        <authorList>
            <person name="Nelson K.E."/>
            <person name="Fouts D.E."/>
            <person name="Mongodin E.F."/>
            <person name="Ravel J."/>
            <person name="DeBoy R.T."/>
            <person name="Kolonay J.F."/>
            <person name="Rasko D.A."/>
            <person name="Angiuoli S.V."/>
            <person name="Gill S.R."/>
            <person name="Paulsen I.T."/>
            <person name="Peterson J.D."/>
            <person name="White O."/>
            <person name="Nelson W.C."/>
            <person name="Nierman W.C."/>
            <person name="Beanan M.J."/>
            <person name="Brinkac L.M."/>
            <person name="Daugherty S.C."/>
            <person name="Dodson R.J."/>
            <person name="Durkin A.S."/>
            <person name="Madupu R."/>
            <person name="Haft D.H."/>
            <person name="Selengut J."/>
            <person name="Van Aken S.E."/>
            <person name="Khouri H.M."/>
            <person name="Fedorova N."/>
            <person name="Forberger H.A."/>
            <person name="Tran B."/>
            <person name="Kathariou S."/>
            <person name="Wonderling L.D."/>
            <person name="Uhlich G.A."/>
            <person name="Bayles D.O."/>
            <person name="Luchansky J.B."/>
            <person name="Fraser C.M."/>
        </authorList>
    </citation>
    <scope>NUCLEOTIDE SEQUENCE [LARGE SCALE GENOMIC DNA]</scope>
    <source>
        <strain>F2365</strain>
    </source>
</reference>